<reference key="1">
    <citation type="journal article" date="2004" name="Biol. J. Linn. Soc. Lond.">
        <title>Genets (Carnivora, Viverridae) in Africa: an evolutionary synthesis based on cytochrome b sequences and morphological characters.</title>
        <authorList>
            <person name="Gaubert P."/>
            <person name="Fernandes C.A."/>
            <person name="Bruford M.W."/>
            <person name="Veron G."/>
        </authorList>
    </citation>
    <scope>NUCLEOTIDE SEQUENCE [GENOMIC DNA]</scope>
</reference>
<gene>
    <name type="primary">MT-CYB</name>
    <name type="synonym">COB</name>
    <name type="synonym">CYTB</name>
    <name type="synonym">MTCYB</name>
</gene>
<organism>
    <name type="scientific">Genetta tigrina</name>
    <name type="common">Large-spotted genet</name>
    <dbReference type="NCBI Taxonomy" id="220101"/>
    <lineage>
        <taxon>Eukaryota</taxon>
        <taxon>Metazoa</taxon>
        <taxon>Chordata</taxon>
        <taxon>Craniata</taxon>
        <taxon>Vertebrata</taxon>
        <taxon>Euteleostomi</taxon>
        <taxon>Mammalia</taxon>
        <taxon>Eutheria</taxon>
        <taxon>Laurasiatheria</taxon>
        <taxon>Carnivora</taxon>
        <taxon>Feliformia</taxon>
        <taxon>Viverridae</taxon>
        <taxon>Viverrinae</taxon>
        <taxon>Genetta</taxon>
    </lineage>
</organism>
<accession>Q6XBW8</accession>
<protein>
    <recommendedName>
        <fullName>Cytochrome b</fullName>
    </recommendedName>
    <alternativeName>
        <fullName>Complex III subunit 3</fullName>
    </alternativeName>
    <alternativeName>
        <fullName>Complex III subunit III</fullName>
    </alternativeName>
    <alternativeName>
        <fullName>Cytochrome b-c1 complex subunit 3</fullName>
    </alternativeName>
    <alternativeName>
        <fullName>Ubiquinol-cytochrome-c reductase complex cytochrome b subunit</fullName>
    </alternativeName>
</protein>
<feature type="chain" id="PRO_0000247809" description="Cytochrome b">
    <location>
        <begin position="1"/>
        <end position="379"/>
    </location>
</feature>
<feature type="transmembrane region" description="Helical" evidence="2">
    <location>
        <begin position="33"/>
        <end position="53"/>
    </location>
</feature>
<feature type="transmembrane region" description="Helical" evidence="2">
    <location>
        <begin position="77"/>
        <end position="98"/>
    </location>
</feature>
<feature type="transmembrane region" description="Helical" evidence="2">
    <location>
        <begin position="113"/>
        <end position="133"/>
    </location>
</feature>
<feature type="transmembrane region" description="Helical" evidence="2">
    <location>
        <begin position="178"/>
        <end position="198"/>
    </location>
</feature>
<feature type="transmembrane region" description="Helical" evidence="2">
    <location>
        <begin position="226"/>
        <end position="246"/>
    </location>
</feature>
<feature type="transmembrane region" description="Helical" evidence="2">
    <location>
        <begin position="288"/>
        <end position="308"/>
    </location>
</feature>
<feature type="transmembrane region" description="Helical" evidence="2">
    <location>
        <begin position="320"/>
        <end position="340"/>
    </location>
</feature>
<feature type="transmembrane region" description="Helical" evidence="2">
    <location>
        <begin position="347"/>
        <end position="367"/>
    </location>
</feature>
<feature type="binding site" description="axial binding residue" evidence="2">
    <location>
        <position position="83"/>
    </location>
    <ligand>
        <name>heme b</name>
        <dbReference type="ChEBI" id="CHEBI:60344"/>
        <label>b562</label>
    </ligand>
    <ligandPart>
        <name>Fe</name>
        <dbReference type="ChEBI" id="CHEBI:18248"/>
    </ligandPart>
</feature>
<feature type="binding site" description="axial binding residue" evidence="2">
    <location>
        <position position="97"/>
    </location>
    <ligand>
        <name>heme b</name>
        <dbReference type="ChEBI" id="CHEBI:60344"/>
        <label>b566</label>
    </ligand>
    <ligandPart>
        <name>Fe</name>
        <dbReference type="ChEBI" id="CHEBI:18248"/>
    </ligandPart>
</feature>
<feature type="binding site" description="axial binding residue" evidence="2">
    <location>
        <position position="182"/>
    </location>
    <ligand>
        <name>heme b</name>
        <dbReference type="ChEBI" id="CHEBI:60344"/>
        <label>b562</label>
    </ligand>
    <ligandPart>
        <name>Fe</name>
        <dbReference type="ChEBI" id="CHEBI:18248"/>
    </ligandPart>
</feature>
<feature type="binding site" description="axial binding residue" evidence="2">
    <location>
        <position position="196"/>
    </location>
    <ligand>
        <name>heme b</name>
        <dbReference type="ChEBI" id="CHEBI:60344"/>
        <label>b566</label>
    </ligand>
    <ligandPart>
        <name>Fe</name>
        <dbReference type="ChEBI" id="CHEBI:18248"/>
    </ligandPart>
</feature>
<feature type="binding site" evidence="2">
    <location>
        <position position="201"/>
    </location>
    <ligand>
        <name>a ubiquinone</name>
        <dbReference type="ChEBI" id="CHEBI:16389"/>
    </ligand>
</feature>
<evidence type="ECO:0000250" key="1"/>
<evidence type="ECO:0000250" key="2">
    <source>
        <dbReference type="UniProtKB" id="P00157"/>
    </source>
</evidence>
<evidence type="ECO:0000255" key="3">
    <source>
        <dbReference type="PROSITE-ProRule" id="PRU00967"/>
    </source>
</evidence>
<evidence type="ECO:0000255" key="4">
    <source>
        <dbReference type="PROSITE-ProRule" id="PRU00968"/>
    </source>
</evidence>
<keyword id="KW-0249">Electron transport</keyword>
<keyword id="KW-0349">Heme</keyword>
<keyword id="KW-0408">Iron</keyword>
<keyword id="KW-0472">Membrane</keyword>
<keyword id="KW-0479">Metal-binding</keyword>
<keyword id="KW-0496">Mitochondrion</keyword>
<keyword id="KW-0999">Mitochondrion inner membrane</keyword>
<keyword id="KW-0679">Respiratory chain</keyword>
<keyword id="KW-0812">Transmembrane</keyword>
<keyword id="KW-1133">Transmembrane helix</keyword>
<keyword id="KW-0813">Transport</keyword>
<keyword id="KW-0830">Ubiquinone</keyword>
<geneLocation type="mitochondrion"/>
<name>CYB_GENTG</name>
<proteinExistence type="inferred from homology"/>
<comment type="function">
    <text evidence="2">Component of the ubiquinol-cytochrome c reductase complex (complex III or cytochrome b-c1 complex) that is part of the mitochondrial respiratory chain. The b-c1 complex mediates electron transfer from ubiquinol to cytochrome c. Contributes to the generation of a proton gradient across the mitochondrial membrane that is then used for ATP synthesis.</text>
</comment>
<comment type="cofactor">
    <cofactor evidence="2">
        <name>heme b</name>
        <dbReference type="ChEBI" id="CHEBI:60344"/>
    </cofactor>
    <text evidence="2">Binds 2 heme b groups non-covalently.</text>
</comment>
<comment type="subunit">
    <text evidence="2">The cytochrome bc1 complex contains 11 subunits: 3 respiratory subunits (MT-CYB, CYC1 and UQCRFS1), 2 core proteins (UQCRC1 and UQCRC2) and 6 low-molecular weight proteins (UQCRH/QCR6, UQCRB/QCR7, UQCRQ/QCR8, UQCR10/QCR9, UQCR11/QCR10 and a cleavage product of UQCRFS1). This cytochrome bc1 complex then forms a dimer.</text>
</comment>
<comment type="subcellular location">
    <subcellularLocation>
        <location evidence="2">Mitochondrion inner membrane</location>
        <topology evidence="2">Multi-pass membrane protein</topology>
    </subcellularLocation>
</comment>
<comment type="miscellaneous">
    <text evidence="1">Heme 1 (or BL or b562) is low-potential and absorbs at about 562 nm, and heme 2 (or BH or b566) is high-potential and absorbs at about 566 nm.</text>
</comment>
<comment type="similarity">
    <text evidence="3 4">Belongs to the cytochrome b family.</text>
</comment>
<comment type="caution">
    <text evidence="2">The full-length protein contains only eight transmembrane helices, not nine as predicted by bioinformatics tools.</text>
</comment>
<dbReference type="EMBL" id="AY241889">
    <property type="protein sequence ID" value="AAP73009.1"/>
    <property type="molecule type" value="Genomic_DNA"/>
</dbReference>
<dbReference type="SMR" id="Q6XBW8"/>
<dbReference type="GO" id="GO:0005743">
    <property type="term" value="C:mitochondrial inner membrane"/>
    <property type="evidence" value="ECO:0007669"/>
    <property type="project" value="UniProtKB-SubCell"/>
</dbReference>
<dbReference type="GO" id="GO:0045275">
    <property type="term" value="C:respiratory chain complex III"/>
    <property type="evidence" value="ECO:0007669"/>
    <property type="project" value="InterPro"/>
</dbReference>
<dbReference type="GO" id="GO:0046872">
    <property type="term" value="F:metal ion binding"/>
    <property type="evidence" value="ECO:0007669"/>
    <property type="project" value="UniProtKB-KW"/>
</dbReference>
<dbReference type="GO" id="GO:0008121">
    <property type="term" value="F:ubiquinol-cytochrome-c reductase activity"/>
    <property type="evidence" value="ECO:0007669"/>
    <property type="project" value="InterPro"/>
</dbReference>
<dbReference type="GO" id="GO:0006122">
    <property type="term" value="P:mitochondrial electron transport, ubiquinol to cytochrome c"/>
    <property type="evidence" value="ECO:0007669"/>
    <property type="project" value="TreeGrafter"/>
</dbReference>
<dbReference type="CDD" id="cd00290">
    <property type="entry name" value="cytochrome_b_C"/>
    <property type="match status" value="1"/>
</dbReference>
<dbReference type="CDD" id="cd00284">
    <property type="entry name" value="Cytochrome_b_N"/>
    <property type="match status" value="1"/>
</dbReference>
<dbReference type="FunFam" id="1.20.810.10:FF:000002">
    <property type="entry name" value="Cytochrome b"/>
    <property type="match status" value="1"/>
</dbReference>
<dbReference type="Gene3D" id="1.20.810.10">
    <property type="entry name" value="Cytochrome Bc1 Complex, Chain C"/>
    <property type="match status" value="1"/>
</dbReference>
<dbReference type="InterPro" id="IPR005798">
    <property type="entry name" value="Cyt_b/b6_C"/>
</dbReference>
<dbReference type="InterPro" id="IPR036150">
    <property type="entry name" value="Cyt_b/b6_C_sf"/>
</dbReference>
<dbReference type="InterPro" id="IPR005797">
    <property type="entry name" value="Cyt_b/b6_N"/>
</dbReference>
<dbReference type="InterPro" id="IPR027387">
    <property type="entry name" value="Cytb/b6-like_sf"/>
</dbReference>
<dbReference type="InterPro" id="IPR030689">
    <property type="entry name" value="Cytochrome_b"/>
</dbReference>
<dbReference type="InterPro" id="IPR048260">
    <property type="entry name" value="Cytochrome_b_C_euk/bac"/>
</dbReference>
<dbReference type="InterPro" id="IPR048259">
    <property type="entry name" value="Cytochrome_b_N_euk/bac"/>
</dbReference>
<dbReference type="InterPro" id="IPR016174">
    <property type="entry name" value="Di-haem_cyt_TM"/>
</dbReference>
<dbReference type="PANTHER" id="PTHR19271">
    <property type="entry name" value="CYTOCHROME B"/>
    <property type="match status" value="1"/>
</dbReference>
<dbReference type="PANTHER" id="PTHR19271:SF16">
    <property type="entry name" value="CYTOCHROME B"/>
    <property type="match status" value="1"/>
</dbReference>
<dbReference type="Pfam" id="PF00032">
    <property type="entry name" value="Cytochrom_B_C"/>
    <property type="match status" value="1"/>
</dbReference>
<dbReference type="Pfam" id="PF00033">
    <property type="entry name" value="Cytochrome_B"/>
    <property type="match status" value="1"/>
</dbReference>
<dbReference type="PIRSF" id="PIRSF038885">
    <property type="entry name" value="COB"/>
    <property type="match status" value="1"/>
</dbReference>
<dbReference type="SUPFAM" id="SSF81648">
    <property type="entry name" value="a domain/subunit of cytochrome bc1 complex (Ubiquinol-cytochrome c reductase)"/>
    <property type="match status" value="1"/>
</dbReference>
<dbReference type="SUPFAM" id="SSF81342">
    <property type="entry name" value="Transmembrane di-heme cytochromes"/>
    <property type="match status" value="1"/>
</dbReference>
<dbReference type="PROSITE" id="PS51003">
    <property type="entry name" value="CYTB_CTER"/>
    <property type="match status" value="1"/>
</dbReference>
<dbReference type="PROSITE" id="PS51002">
    <property type="entry name" value="CYTB_NTER"/>
    <property type="match status" value="1"/>
</dbReference>
<sequence length="379" mass="42627">MTNIRKSHPLAKIINESFIDLPAPSNISAWWNFGSLLGVCLIIQILTGLFLAMHYTSDTMTAFSSVTHICRDVNYGWIIRYIHANGASMFFICLFMHVGRGVYYGSFTFTETWNIGILLMFTVMATAFMGYVLPWGQMSFWGATVITNLLSAIPYVGTNLVEWIWGGFSVDKATLTRFFAFHFILPFIISALAAVHLLFLHETGSNNPSGVVSDSDKIPFHPYYTIKDILGLLLLILVLMLLVLFSPDLLGDPNNYIPANPLNTPPHIKPEWYFLFAYAILRSIPNKLGGVLALVLSILILAIVPLLHTSKQRSMMFRPLSQCLFWLLVADLLTLTWIGGQPVEHPFITIGQLASILYFSIFLILMPISGIIENRLLKW</sequence>